<sequence length="343" mass="36173">MKVLGIETSCDETGVAIYDGSVRRLLGHCLHSQIDLHAAYGGVVPELASRDHIRRLPLLLKQLFGETGLSRRDIDAVAYTAGPGLAGALLTGASFAEAFALAAGVPALPIHHLEGHLLSPLLADDAPRFPFVALLVSGGHTQLMHVAGVGRYELLGESLDDAAGEAFDKTAKLLGLGYPGGPQLSALAAQGCAGRFKLPRPMLHSGDFDFSFSGLKTAVLNRVSSDDWEPGLAADLAADFQEAVVEVLCAKALAALKHTGLDTLVVAGGVGANRRLRERLDNLAARRRYRVCYPEPALCTDNGAMIAFAGALRLEAGERRAAAPAVRVRPRWPLVELDAPGCP</sequence>
<protein>
    <recommendedName>
        <fullName evidence="1">tRNA N6-adenosine threonylcarbamoyltransferase</fullName>
        <ecNumber evidence="1">2.3.1.234</ecNumber>
    </recommendedName>
    <alternativeName>
        <fullName evidence="1">N6-L-threonylcarbamoyladenine synthase</fullName>
        <shortName evidence="1">t(6)A synthase</shortName>
    </alternativeName>
    <alternativeName>
        <fullName evidence="1">t(6)A37 threonylcarbamoyladenosine biosynthesis protein TsaD</fullName>
    </alternativeName>
    <alternativeName>
        <fullName evidence="1">tRNA threonylcarbamoyladenosine biosynthesis protein TsaD</fullName>
    </alternativeName>
</protein>
<keyword id="KW-0012">Acyltransferase</keyword>
<keyword id="KW-0963">Cytoplasm</keyword>
<keyword id="KW-0408">Iron</keyword>
<keyword id="KW-0479">Metal-binding</keyword>
<keyword id="KW-1185">Reference proteome</keyword>
<keyword id="KW-0808">Transferase</keyword>
<keyword id="KW-0819">tRNA processing</keyword>
<proteinExistence type="inferred from homology"/>
<comment type="function">
    <text evidence="1">Required for the formation of a threonylcarbamoyl group on adenosine at position 37 (t(6)A37) in tRNAs that read codons beginning with adenine. Is involved in the transfer of the threonylcarbamoyl moiety of threonylcarbamoyl-AMP (TC-AMP) to the N6 group of A37, together with TsaE and TsaB. TsaD likely plays a direct catalytic role in this reaction.</text>
</comment>
<comment type="catalytic activity">
    <reaction evidence="1">
        <text>L-threonylcarbamoyladenylate + adenosine(37) in tRNA = N(6)-L-threonylcarbamoyladenosine(37) in tRNA + AMP + H(+)</text>
        <dbReference type="Rhea" id="RHEA:37059"/>
        <dbReference type="Rhea" id="RHEA-COMP:10162"/>
        <dbReference type="Rhea" id="RHEA-COMP:10163"/>
        <dbReference type="ChEBI" id="CHEBI:15378"/>
        <dbReference type="ChEBI" id="CHEBI:73682"/>
        <dbReference type="ChEBI" id="CHEBI:74411"/>
        <dbReference type="ChEBI" id="CHEBI:74418"/>
        <dbReference type="ChEBI" id="CHEBI:456215"/>
        <dbReference type="EC" id="2.3.1.234"/>
    </reaction>
</comment>
<comment type="cofactor">
    <cofactor evidence="1">
        <name>Fe(2+)</name>
        <dbReference type="ChEBI" id="CHEBI:29033"/>
    </cofactor>
    <text evidence="1">Binds 1 Fe(2+) ion per subunit.</text>
</comment>
<comment type="subcellular location">
    <subcellularLocation>
        <location evidence="1">Cytoplasm</location>
    </subcellularLocation>
</comment>
<comment type="similarity">
    <text evidence="1">Belongs to the KAE1 / TsaD family.</text>
</comment>
<gene>
    <name evidence="1" type="primary">tsaD</name>
    <name type="synonym">gcp</name>
    <name type="ordered locus">azo3224</name>
</gene>
<evidence type="ECO:0000255" key="1">
    <source>
        <dbReference type="HAMAP-Rule" id="MF_01445"/>
    </source>
</evidence>
<accession>A1KAI4</accession>
<feature type="chain" id="PRO_0000303260" description="tRNA N6-adenosine threonylcarbamoyltransferase">
    <location>
        <begin position="1"/>
        <end position="343"/>
    </location>
</feature>
<feature type="binding site" evidence="1">
    <location>
        <position position="112"/>
    </location>
    <ligand>
        <name>Fe cation</name>
        <dbReference type="ChEBI" id="CHEBI:24875"/>
    </ligand>
</feature>
<feature type="binding site" evidence="1">
    <location>
        <position position="116"/>
    </location>
    <ligand>
        <name>Fe cation</name>
        <dbReference type="ChEBI" id="CHEBI:24875"/>
    </ligand>
</feature>
<feature type="binding site" evidence="1">
    <location>
        <begin position="135"/>
        <end position="139"/>
    </location>
    <ligand>
        <name>substrate</name>
    </ligand>
</feature>
<feature type="binding site" evidence="1">
    <location>
        <position position="168"/>
    </location>
    <ligand>
        <name>substrate</name>
    </ligand>
</feature>
<feature type="binding site" evidence="1">
    <location>
        <position position="181"/>
    </location>
    <ligand>
        <name>substrate</name>
    </ligand>
</feature>
<feature type="binding site" evidence="1">
    <location>
        <position position="273"/>
    </location>
    <ligand>
        <name>substrate</name>
    </ligand>
</feature>
<feature type="binding site" evidence="1">
    <location>
        <position position="301"/>
    </location>
    <ligand>
        <name>Fe cation</name>
        <dbReference type="ChEBI" id="CHEBI:24875"/>
    </ligand>
</feature>
<reference key="1">
    <citation type="journal article" date="2006" name="Nat. Biotechnol.">
        <title>Complete genome of the mutualistic, N2-fixing grass endophyte Azoarcus sp. strain BH72.</title>
        <authorList>
            <person name="Krause A."/>
            <person name="Ramakumar A."/>
            <person name="Bartels D."/>
            <person name="Battistoni F."/>
            <person name="Bekel T."/>
            <person name="Boch J."/>
            <person name="Boehm M."/>
            <person name="Friedrich F."/>
            <person name="Hurek T."/>
            <person name="Krause L."/>
            <person name="Linke B."/>
            <person name="McHardy A.C."/>
            <person name="Sarkar A."/>
            <person name="Schneiker S."/>
            <person name="Syed A.A."/>
            <person name="Thauer R."/>
            <person name="Vorhoelter F.-J."/>
            <person name="Weidner S."/>
            <person name="Puehler A."/>
            <person name="Reinhold-Hurek B."/>
            <person name="Kaiser O."/>
            <person name="Goesmann A."/>
        </authorList>
    </citation>
    <scope>NUCLEOTIDE SEQUENCE [LARGE SCALE GENOMIC DNA]</scope>
    <source>
        <strain>BH72</strain>
    </source>
</reference>
<organism>
    <name type="scientific">Azoarcus sp. (strain BH72)</name>
    <dbReference type="NCBI Taxonomy" id="418699"/>
    <lineage>
        <taxon>Bacteria</taxon>
        <taxon>Pseudomonadati</taxon>
        <taxon>Pseudomonadota</taxon>
        <taxon>Betaproteobacteria</taxon>
        <taxon>Rhodocyclales</taxon>
        <taxon>Zoogloeaceae</taxon>
        <taxon>Azoarcus</taxon>
    </lineage>
</organism>
<dbReference type="EC" id="2.3.1.234" evidence="1"/>
<dbReference type="EMBL" id="AM406670">
    <property type="protein sequence ID" value="CAL95840.1"/>
    <property type="molecule type" value="Genomic_DNA"/>
</dbReference>
<dbReference type="RefSeq" id="WP_011766948.1">
    <property type="nucleotide sequence ID" value="NC_008702.1"/>
</dbReference>
<dbReference type="SMR" id="A1KAI4"/>
<dbReference type="STRING" id="62928.azo3224"/>
<dbReference type="KEGG" id="azo:azo3224"/>
<dbReference type="eggNOG" id="COG0533">
    <property type="taxonomic scope" value="Bacteria"/>
</dbReference>
<dbReference type="HOGENOM" id="CLU_023208_0_0_4"/>
<dbReference type="Proteomes" id="UP000002588">
    <property type="component" value="Chromosome"/>
</dbReference>
<dbReference type="GO" id="GO:0005737">
    <property type="term" value="C:cytoplasm"/>
    <property type="evidence" value="ECO:0007669"/>
    <property type="project" value="UniProtKB-SubCell"/>
</dbReference>
<dbReference type="GO" id="GO:0005506">
    <property type="term" value="F:iron ion binding"/>
    <property type="evidence" value="ECO:0007669"/>
    <property type="project" value="UniProtKB-UniRule"/>
</dbReference>
<dbReference type="GO" id="GO:0061711">
    <property type="term" value="F:N(6)-L-threonylcarbamoyladenine synthase activity"/>
    <property type="evidence" value="ECO:0007669"/>
    <property type="project" value="UniProtKB-EC"/>
</dbReference>
<dbReference type="GO" id="GO:0002949">
    <property type="term" value="P:tRNA threonylcarbamoyladenosine modification"/>
    <property type="evidence" value="ECO:0007669"/>
    <property type="project" value="UniProtKB-UniRule"/>
</dbReference>
<dbReference type="CDD" id="cd24133">
    <property type="entry name" value="ASKHA_NBD_TsaD_bac"/>
    <property type="match status" value="1"/>
</dbReference>
<dbReference type="FunFam" id="3.30.420.40:FF:000040">
    <property type="entry name" value="tRNA N6-adenosine threonylcarbamoyltransferase"/>
    <property type="match status" value="1"/>
</dbReference>
<dbReference type="Gene3D" id="3.30.420.40">
    <property type="match status" value="2"/>
</dbReference>
<dbReference type="HAMAP" id="MF_01445">
    <property type="entry name" value="TsaD"/>
    <property type="match status" value="1"/>
</dbReference>
<dbReference type="InterPro" id="IPR043129">
    <property type="entry name" value="ATPase_NBD"/>
</dbReference>
<dbReference type="InterPro" id="IPR000905">
    <property type="entry name" value="Gcp-like_dom"/>
</dbReference>
<dbReference type="InterPro" id="IPR017861">
    <property type="entry name" value="KAE1/TsaD"/>
</dbReference>
<dbReference type="InterPro" id="IPR022450">
    <property type="entry name" value="TsaD"/>
</dbReference>
<dbReference type="NCBIfam" id="TIGR00329">
    <property type="entry name" value="gcp_kae1"/>
    <property type="match status" value="1"/>
</dbReference>
<dbReference type="NCBIfam" id="TIGR03723">
    <property type="entry name" value="T6A_TsaD_YgjD"/>
    <property type="match status" value="1"/>
</dbReference>
<dbReference type="PANTHER" id="PTHR11735">
    <property type="entry name" value="TRNA N6-ADENOSINE THREONYLCARBAMOYLTRANSFERASE"/>
    <property type="match status" value="1"/>
</dbReference>
<dbReference type="PANTHER" id="PTHR11735:SF6">
    <property type="entry name" value="TRNA N6-ADENOSINE THREONYLCARBAMOYLTRANSFERASE, MITOCHONDRIAL"/>
    <property type="match status" value="1"/>
</dbReference>
<dbReference type="Pfam" id="PF00814">
    <property type="entry name" value="TsaD"/>
    <property type="match status" value="1"/>
</dbReference>
<dbReference type="PRINTS" id="PR00789">
    <property type="entry name" value="OSIALOPTASE"/>
</dbReference>
<dbReference type="SUPFAM" id="SSF53067">
    <property type="entry name" value="Actin-like ATPase domain"/>
    <property type="match status" value="2"/>
</dbReference>
<name>TSAD_AZOSB</name>